<organism>
    <name type="scientific">Haloarcula hispanica (strain ATCC 33960 / DSM 4426 / JCM 8911 / NBRC 102182 / NCIMB 2187 / VKM B-1755)</name>
    <dbReference type="NCBI Taxonomy" id="634497"/>
    <lineage>
        <taxon>Archaea</taxon>
        <taxon>Methanobacteriati</taxon>
        <taxon>Methanobacteriota</taxon>
        <taxon>Stenosarchaea group</taxon>
        <taxon>Halobacteria</taxon>
        <taxon>Halobacteriales</taxon>
        <taxon>Haloarculaceae</taxon>
        <taxon>Haloarcula</taxon>
    </lineage>
</organism>
<evidence type="ECO:0000250" key="1">
    <source>
        <dbReference type="UniProtKB" id="P25062"/>
    </source>
</evidence>
<evidence type="ECO:0000255" key="2"/>
<evidence type="ECO:0000255" key="3">
    <source>
        <dbReference type="PROSITE-ProRule" id="PRU00498"/>
    </source>
</evidence>
<evidence type="ECO:0000256" key="4">
    <source>
        <dbReference type="SAM" id="MobiDB-lite"/>
    </source>
</evidence>
<evidence type="ECO:0000269" key="5">
    <source>
    </source>
</evidence>
<evidence type="ECO:0000303" key="6">
    <source>
    </source>
</evidence>
<evidence type="ECO:0000305" key="7"/>
<evidence type="ECO:0000312" key="8">
    <source>
        <dbReference type="EMBL" id="AEM57587.1"/>
    </source>
</evidence>
<keyword id="KW-1003">Cell membrane</keyword>
<keyword id="KW-0134">Cell wall</keyword>
<keyword id="KW-0961">Cell wall biogenesis/degradation</keyword>
<keyword id="KW-0325">Glycoprotein</keyword>
<keyword id="KW-0449">Lipoprotein</keyword>
<keyword id="KW-0472">Membrane</keyword>
<keyword id="KW-0701">S-layer</keyword>
<keyword id="KW-0964">Secreted</keyword>
<keyword id="KW-0732">Signal</keyword>
<keyword id="KW-0812">Transmembrane</keyword>
<keyword id="KW-1133">Transmembrane helix</keyword>
<reference key="1">
    <citation type="journal article" date="2011" name="J. Bacteriol.">
        <title>Complete genome sequence of Haloarcula hispanica, a model haloarchaeon for studying genetics, metabolism, and virus-host interaction.</title>
        <authorList>
            <person name="Liu H."/>
            <person name="Wu Z."/>
            <person name="Li M."/>
            <person name="Zhang F."/>
            <person name="Zheng H."/>
            <person name="Han J."/>
            <person name="Liu J."/>
            <person name="Zhou J."/>
            <person name="Wang S."/>
            <person name="Xiang H."/>
        </authorList>
    </citation>
    <scope>NUCLEOTIDE SEQUENCE [LARGE SCALE GENOMIC DNA]</scope>
    <source>
        <strain>ATCC 33960 / DSM 4426 / JCM 8911 / NBRC 102182 / NCIMB 2187 / VKM B-1755</strain>
    </source>
</reference>
<reference key="2">
    <citation type="journal article" date="2015" name="Glycobiology">
        <title>Identification of the S-layer glycoproteins and their covalently linked glycans in the halophilic archaeon Haloarcula hispanica.</title>
        <authorList>
            <person name="Lu H."/>
            <person name="Lue Y."/>
            <person name="Ren J."/>
            <person name="Wang Z."/>
            <person name="Wang Q."/>
            <person name="Luo Y."/>
            <person name="Han J."/>
            <person name="Xiang H."/>
            <person name="Du Y."/>
            <person name="Jin C."/>
        </authorList>
    </citation>
    <scope>FUNCTION</scope>
    <scope>SUBCELLULAR LOCATION</scope>
    <scope>GLYCOSYLATION AT ASN-306</scope>
</reference>
<proteinExistence type="evidence at protein level"/>
<dbReference type="EMBL" id="CP002921">
    <property type="protein sequence ID" value="AEM57587.1"/>
    <property type="molecule type" value="Genomic_DNA"/>
</dbReference>
<dbReference type="RefSeq" id="WP_014040752.1">
    <property type="nucleotide sequence ID" value="NC_015948.1"/>
</dbReference>
<dbReference type="GlyCosmos" id="G0HV85">
    <property type="glycosylation" value="22 sites, No reported glycans"/>
</dbReference>
<dbReference type="iPTMnet" id="G0HV85"/>
<dbReference type="GeneID" id="11050867"/>
<dbReference type="KEGG" id="hhi:HAH_1991"/>
<dbReference type="eggNOG" id="arCOG06273">
    <property type="taxonomic scope" value="Archaea"/>
</dbReference>
<dbReference type="HOGENOM" id="CLU_008482_1_0_2"/>
<dbReference type="OrthoDB" id="325633at2157"/>
<dbReference type="Proteomes" id="UP000005629">
    <property type="component" value="Chromosome I"/>
</dbReference>
<dbReference type="GO" id="GO:0005576">
    <property type="term" value="C:extracellular region"/>
    <property type="evidence" value="ECO:0007669"/>
    <property type="project" value="UniProtKB-KW"/>
</dbReference>
<dbReference type="GO" id="GO:0005886">
    <property type="term" value="C:plasma membrane"/>
    <property type="evidence" value="ECO:0007669"/>
    <property type="project" value="UniProtKB-SubCell"/>
</dbReference>
<dbReference type="GO" id="GO:0030115">
    <property type="term" value="C:S-layer"/>
    <property type="evidence" value="ECO:0007669"/>
    <property type="project" value="UniProtKB-SubCell"/>
</dbReference>
<dbReference type="GO" id="GO:0071555">
    <property type="term" value="P:cell wall organization"/>
    <property type="evidence" value="ECO:0007669"/>
    <property type="project" value="UniProtKB-KW"/>
</dbReference>
<dbReference type="InterPro" id="IPR057149">
    <property type="entry name" value="DUF7827"/>
</dbReference>
<dbReference type="InterPro" id="IPR026371">
    <property type="entry name" value="PGF_CTERM"/>
</dbReference>
<dbReference type="InterPro" id="IPR055706">
    <property type="entry name" value="Slg1/2_DUF7282"/>
</dbReference>
<dbReference type="InterPro" id="IPR026452">
    <property type="entry name" value="Surf_glycop_sig_pep"/>
</dbReference>
<dbReference type="NCBIfam" id="TIGR04207">
    <property type="entry name" value="halo_sig_pep"/>
    <property type="match status" value="1"/>
</dbReference>
<dbReference type="NCBIfam" id="NF045517">
    <property type="entry name" value="halo_surf_dom"/>
    <property type="match status" value="1"/>
</dbReference>
<dbReference type="NCBIfam" id="TIGR04126">
    <property type="entry name" value="PGF_CTERM"/>
    <property type="match status" value="1"/>
</dbReference>
<dbReference type="Pfam" id="PF23951">
    <property type="entry name" value="DUF7282"/>
    <property type="match status" value="1"/>
</dbReference>
<dbReference type="Pfam" id="PF25162">
    <property type="entry name" value="DUF7827"/>
    <property type="match status" value="1"/>
</dbReference>
<dbReference type="Pfam" id="PF18204">
    <property type="entry name" value="PGF-CTERM"/>
    <property type="match status" value="1"/>
</dbReference>
<name>CSG1_HALHT</name>
<sequence length="918" mass="96693">MTDTNEKIRSLFLTALMVFSVFAGTIAFSGGAAAAANVSVQQAAEYDSGTVELALNGSTGSTVNTGDIDIYVDGNKNPSNYGVSSVDTTDDGTTGRLQFSLDQDVQPNRNLTVKVSGLTGGDNTVVAEDIDVTSQTIDADDDSGDTNAFRGEVLAIRADGDTDNDDATSSTKIVVEDSNGAVVTQDTYTANSKVYTYETENLDTGEEYEVSVAGDADENITISNLDLNVNIDDDVGDGANIDDKDTLAVNVSTTRGGEPANATLFNEDDDKVATQVESLKGNENVVFDFGNQSADDSPYYVKVTDNQTGVSAESDQINVSESDDGEASFESSTVQDNIGDVVNITVQVDNTEDAVINIGDENDDNYYIQGQLEDDNGDGEVTVQFNSYTAGNYSDSTVLSVPGDDDIDNIKEGGDYTRGSLSGDTLEAGSYSMNVTAGTSPDVTSPDTVGTLRLNENSVENIQTWAAPSDADIDDDDVDIYDRIGENLTQSDDVAAEDVVVHEIQASGIEGALEYEQEDGSASDVTEAFIAATDTTPYRINDSDATTSGLRLYVNRTDVGANADANPIDFSNSSDAVTVVDDPDNNTYFVAVDTSDVVFENGKTIVKEEDTRLNATFSVREGPLTDDRNSDSAIYTTSERDATLDLDDSGVVTVSAAAGQEVTGETNVAPGSELEVEMESESDANPFVIRPEVDVATDGTYTATADFQDYSAGTNFTVQTLDVDGDSDFSDEEDGRIVEADTATVSISEQESDGSEVVVDSAQLSEGGFIAIHAGNASGDVVGNSEYLGAGSHEDITVTLDEPMDEDFTAVAMPHQDTNGNEAYDFPGDDDPYTQNGSAVTDSANVTIVEEEQTEAPDTETETEAPDTETEEETDAPATDEPATDESETTAAEGPGFTAAIALIALVAAALLAVRRDN</sequence>
<gene>
    <name evidence="6" type="primary">slg1</name>
    <name evidence="8" type="ordered locus">HAH_1991</name>
</gene>
<accession>G0HV85</accession>
<feature type="signal peptide" evidence="2">
    <location>
        <begin position="1"/>
        <end position="34"/>
    </location>
</feature>
<feature type="chain" id="PRO_0000444246" description="Cell surface glycoprotein 1" evidence="2">
    <location>
        <begin position="35"/>
        <end status="unknown"/>
    </location>
</feature>
<feature type="propeptide" id="PRO_0000444247" description="Removed by archaeosortase" evidence="1">
    <location>
        <begin status="unknown"/>
        <end position="918"/>
    </location>
</feature>
<feature type="transmembrane region" description="Helical" evidence="2">
    <location>
        <begin position="894"/>
        <end position="914"/>
    </location>
</feature>
<feature type="region of interest" description="Disordered" evidence="4">
    <location>
        <begin position="815"/>
        <end position="894"/>
    </location>
</feature>
<feature type="short sequence motif" description="PGF sorting signal" evidence="1">
    <location>
        <begin position="895"/>
        <end position="897"/>
    </location>
</feature>
<feature type="compositionally biased region" description="Polar residues" evidence="4">
    <location>
        <begin position="833"/>
        <end position="846"/>
    </location>
</feature>
<feature type="compositionally biased region" description="Acidic residues" evidence="4">
    <location>
        <begin position="849"/>
        <end position="875"/>
    </location>
</feature>
<feature type="glycosylation site" description="N-linked (GlcNAc...) asparagine" evidence="3">
    <location>
        <position position="37"/>
    </location>
</feature>
<feature type="glycosylation site" description="N-linked (GlcNAc...) asparagine" evidence="3">
    <location>
        <position position="56"/>
    </location>
</feature>
<feature type="glycosylation site" description="N-linked (GlcNAc...) asparagine" evidence="3">
    <location>
        <position position="110"/>
    </location>
</feature>
<feature type="glycosylation site" description="N-linked (GlcNAc...) asparagine" evidence="3">
    <location>
        <position position="219"/>
    </location>
</feature>
<feature type="glycosylation site" description="N-linked (GlcNAc...) asparagine" evidence="3">
    <location>
        <position position="250"/>
    </location>
</feature>
<feature type="glycosylation site" description="N-linked (GlcNAc...) asparagine" evidence="3">
    <location>
        <position position="261"/>
    </location>
</feature>
<feature type="glycosylation site" description="N-linked (GlcNAc...) asparagine" evidence="3">
    <location>
        <position position="291"/>
    </location>
</feature>
<feature type="glycosylation site" description="N-linked (GalNAc...) asparagine" evidence="5">
    <location>
        <position position="306"/>
    </location>
</feature>
<feature type="glycosylation site" description="N-linked (GlcNAc...) asparagine" evidence="3">
    <location>
        <position position="318"/>
    </location>
</feature>
<feature type="glycosylation site" description="N-linked (GlcNAc...) asparagine" evidence="3">
    <location>
        <position position="343"/>
    </location>
</feature>
<feature type="glycosylation site" description="N-linked (GlcNAc...) asparagine" evidence="3">
    <location>
        <position position="392"/>
    </location>
</feature>
<feature type="glycosylation site" description="N-linked (GlcNAc...) asparagine" evidence="3">
    <location>
        <position position="434"/>
    </location>
</feature>
<feature type="glycosylation site" description="N-linked (GlcNAc...) asparagine" evidence="3">
    <location>
        <position position="487"/>
    </location>
</feature>
<feature type="glycosylation site" description="N-linked (GlcNAc...) asparagine" evidence="3">
    <location>
        <position position="541"/>
    </location>
</feature>
<feature type="glycosylation site" description="N-linked (GlcNAc...) asparagine" evidence="3">
    <location>
        <position position="555"/>
    </location>
</feature>
<feature type="glycosylation site" description="N-linked (GlcNAc...) asparagine" evidence="3">
    <location>
        <position position="572"/>
    </location>
</feature>
<feature type="glycosylation site" description="N-linked (GlcNAc...) asparagine" evidence="3">
    <location>
        <position position="585"/>
    </location>
</feature>
<feature type="glycosylation site" description="N-linked (GlcNAc...) asparagine" evidence="3">
    <location>
        <position position="614"/>
    </location>
</feature>
<feature type="glycosylation site" description="N-linked (GlcNAc...) asparagine" evidence="3">
    <location>
        <position position="715"/>
    </location>
</feature>
<feature type="glycosylation site" description="N-linked (GlcNAc...) asparagine" evidence="3">
    <location>
        <position position="776"/>
    </location>
</feature>
<feature type="glycosylation site" description="N-linked (GlcNAc...) asparagine" evidence="3">
    <location>
        <position position="836"/>
    </location>
</feature>
<feature type="glycosylation site" description="N-linked (GlcNAc...) asparagine" evidence="3">
    <location>
        <position position="845"/>
    </location>
</feature>
<comment type="function">
    <text evidence="5">S-layer protein. The S-layer is a paracrystalline mono-layered assembly of proteins which coat the surface of the cell. In H.hispanica, the S-layer contains two different glycoproteins, Slg1 and Slg2, which share highly similar amino acid sequences.</text>
</comment>
<comment type="subcellular location">
    <subcellularLocation>
        <location evidence="5">Secreted</location>
        <location evidence="5">Cell wall</location>
        <location evidence="5">S-layer</location>
    </subcellularLocation>
    <subcellularLocation>
        <location evidence="5">Cell membrane</location>
    </subcellularLocation>
</comment>
<comment type="PTM">
    <text evidence="5">N-glycosylated on Asn-306; this N-linked glycan is a branched trisaccharide containing 2-amino-6-sulfo-2,6-dideoxy-glucose (sulfoquinovosamine).</text>
</comment>
<comment type="PTM">
    <text evidence="1">Cleaved by the archaeosortase ArtA at the C-terminus, with removal of a short hydrophobic segment.</text>
</comment>
<comment type="PTM">
    <text evidence="1">Lipidation.</text>
</comment>
<comment type="similarity">
    <text evidence="7">Belongs to the halobacterial S-layer protein family.</text>
</comment>
<protein>
    <recommendedName>
        <fullName evidence="7">Cell surface glycoprotein 1</fullName>
    </recommendedName>
    <alternativeName>
        <fullName evidence="6">S-layer glycoprotein 1</fullName>
    </alternativeName>
</protein>